<feature type="chain" id="PRO_0000071470" description="Serine/threonine-protein phosphatase 2A 56 kDa regulatory subunit delta 2 isoform">
    <location>
        <begin position="1"/>
        <end position="627"/>
    </location>
</feature>
<feature type="region of interest" description="Disordered" evidence="1">
    <location>
        <begin position="1"/>
        <end position="37"/>
    </location>
</feature>
<sequence>MKGLRSKFVKALSLKDEQGSHKNGHSKSHYISKNGSYVETDDVKHTDTHHSSKHELKKLKSHFLKDTLKHKRNHHANSNNEKHENSDKKIHTTVLASGHEDSDYSTFLPVIETSKVKDANHFPPNYPEPKNDSVSSNIDEFPNDSISSASFLSVPQSTPPYLVSQPTPLNKFLAGAENVDIPHSLRPVPRREHSSQFQVSEKRTLVRLPSFDDVHTSEREELFIKKLEQCNIIFDFNDPSSDLASKEIKREALLQMIDYVSENRGISSASLFPYVVNTFSLNVFRPISPALNDYSSDMFALDDEPFLEPAWPHLEEVYLLFIKFLESPDFRASKAKSLVDRRFFNRLLALFDTEDPRERELLKTTLHRIYGKFLNLRSYIRKSMNNVFLQFIYEREKFHGIAELLEILGSIINGFAVPLKEEHKIFLSKVLIPLHQTKSVFLYHPQLTYCIVQFIDKDPSLTKAVLTGILKYWPRINSFKELLFLNEIEDIFEVLEPSEFVNIMSPLFQQLARSISSMHFQVAERALCLWSNEYFTSLVSQNVVTLLPIIYPSLYKTANEHWNSTIQAIACNVLQIFVDMDADFFNGLVEDYKQAIIKQEEVMIIRKQQWCQIEALAAENKPTDYLR</sequence>
<protein>
    <recommendedName>
        <fullName>Serine/threonine-protein phosphatase 2A 56 kDa regulatory subunit delta 2 isoform</fullName>
    </recommendedName>
    <alternativeName>
        <fullName>PP2A, B subunit, B' delta 2 isoform</fullName>
    </alternativeName>
</protein>
<keyword id="KW-0963">Cytoplasm</keyword>
<keyword id="KW-1185">Reference proteome</keyword>
<gene>
    <name type="primary">par2</name>
    <name type="synonym">pbp2</name>
    <name type="ORF">SPAC6F12.12</name>
</gene>
<evidence type="ECO:0000256" key="1">
    <source>
        <dbReference type="SAM" id="MobiDB-lite"/>
    </source>
</evidence>
<evidence type="ECO:0000269" key="2">
    <source>
    </source>
</evidence>
<evidence type="ECO:0000269" key="3">
    <source>
    </source>
</evidence>
<evidence type="ECO:0000305" key="4"/>
<reference key="1">
    <citation type="journal article" date="2001" name="Genes Cells">
        <title>Fission yeast homologues of the B' subunit of protein phosphatase 2A: multiple roles in mitotic cell division and functional interaction with calcineurin.</title>
        <authorList>
            <person name="Tanabe O."/>
            <person name="Hirata D."/>
            <person name="Usui H."/>
            <person name="Nishito Y."/>
            <person name="Miyakawa T."/>
            <person name="Igarashi K."/>
            <person name="Takeda M."/>
        </authorList>
    </citation>
    <scope>NUCLEOTIDE SEQUENCE [GENOMIC DNA]</scope>
    <scope>FUNCTION</scope>
    <scope>SUBUNIT</scope>
    <scope>SUBCELLULAR LOCATION</scope>
</reference>
<reference key="2">
    <citation type="journal article" date="2000" name="Genetics">
        <title>Isolation and characterization of par1(+) and par2(+): two Schizosaccharomyces pombe genes encoding B' subunits of protein phosphatase 2A.</title>
        <authorList>
            <person name="Jiang W."/>
            <person name="Hallberg R.L."/>
        </authorList>
    </citation>
    <scope>NUCLEOTIDE SEQUENCE</scope>
    <scope>FUNCTION</scope>
    <scope>SUBCELLULAR LOCATION</scope>
</reference>
<reference key="3">
    <citation type="journal article" date="2002" name="Nature">
        <title>The genome sequence of Schizosaccharomyces pombe.</title>
        <authorList>
            <person name="Wood V."/>
            <person name="Gwilliam R."/>
            <person name="Rajandream M.A."/>
            <person name="Lyne M.H."/>
            <person name="Lyne R."/>
            <person name="Stewart A."/>
            <person name="Sgouros J.G."/>
            <person name="Peat N."/>
            <person name="Hayles J."/>
            <person name="Baker S.G."/>
            <person name="Basham D."/>
            <person name="Bowman S."/>
            <person name="Brooks K."/>
            <person name="Brown D."/>
            <person name="Brown S."/>
            <person name="Chillingworth T."/>
            <person name="Churcher C.M."/>
            <person name="Collins M."/>
            <person name="Connor R."/>
            <person name="Cronin A."/>
            <person name="Davis P."/>
            <person name="Feltwell T."/>
            <person name="Fraser A."/>
            <person name="Gentles S."/>
            <person name="Goble A."/>
            <person name="Hamlin N."/>
            <person name="Harris D.E."/>
            <person name="Hidalgo J."/>
            <person name="Hodgson G."/>
            <person name="Holroyd S."/>
            <person name="Hornsby T."/>
            <person name="Howarth S."/>
            <person name="Huckle E.J."/>
            <person name="Hunt S."/>
            <person name="Jagels K."/>
            <person name="James K.D."/>
            <person name="Jones L."/>
            <person name="Jones M."/>
            <person name="Leather S."/>
            <person name="McDonald S."/>
            <person name="McLean J."/>
            <person name="Mooney P."/>
            <person name="Moule S."/>
            <person name="Mungall K.L."/>
            <person name="Murphy L.D."/>
            <person name="Niblett D."/>
            <person name="Odell C."/>
            <person name="Oliver K."/>
            <person name="O'Neil S."/>
            <person name="Pearson D."/>
            <person name="Quail M.A."/>
            <person name="Rabbinowitsch E."/>
            <person name="Rutherford K.M."/>
            <person name="Rutter S."/>
            <person name="Saunders D."/>
            <person name="Seeger K."/>
            <person name="Sharp S."/>
            <person name="Skelton J."/>
            <person name="Simmonds M.N."/>
            <person name="Squares R."/>
            <person name="Squares S."/>
            <person name="Stevens K."/>
            <person name="Taylor K."/>
            <person name="Taylor R.G."/>
            <person name="Tivey A."/>
            <person name="Walsh S.V."/>
            <person name="Warren T."/>
            <person name="Whitehead S."/>
            <person name="Woodward J.R."/>
            <person name="Volckaert G."/>
            <person name="Aert R."/>
            <person name="Robben J."/>
            <person name="Grymonprez B."/>
            <person name="Weltjens I."/>
            <person name="Vanstreels E."/>
            <person name="Rieger M."/>
            <person name="Schaefer M."/>
            <person name="Mueller-Auer S."/>
            <person name="Gabel C."/>
            <person name="Fuchs M."/>
            <person name="Duesterhoeft A."/>
            <person name="Fritzc C."/>
            <person name="Holzer E."/>
            <person name="Moestl D."/>
            <person name="Hilbert H."/>
            <person name="Borzym K."/>
            <person name="Langer I."/>
            <person name="Beck A."/>
            <person name="Lehrach H."/>
            <person name="Reinhardt R."/>
            <person name="Pohl T.M."/>
            <person name="Eger P."/>
            <person name="Zimmermann W."/>
            <person name="Wedler H."/>
            <person name="Wambutt R."/>
            <person name="Purnelle B."/>
            <person name="Goffeau A."/>
            <person name="Cadieu E."/>
            <person name="Dreano S."/>
            <person name="Gloux S."/>
            <person name="Lelaure V."/>
            <person name="Mottier S."/>
            <person name="Galibert F."/>
            <person name="Aves S.J."/>
            <person name="Xiang Z."/>
            <person name="Hunt C."/>
            <person name="Moore K."/>
            <person name="Hurst S.M."/>
            <person name="Lucas M."/>
            <person name="Rochet M."/>
            <person name="Gaillardin C."/>
            <person name="Tallada V.A."/>
            <person name="Garzon A."/>
            <person name="Thode G."/>
            <person name="Daga R.R."/>
            <person name="Cruzado L."/>
            <person name="Jimenez J."/>
            <person name="Sanchez M."/>
            <person name="del Rey F."/>
            <person name="Benito J."/>
            <person name="Dominguez A."/>
            <person name="Revuelta J.L."/>
            <person name="Moreno S."/>
            <person name="Armstrong J."/>
            <person name="Forsburg S.L."/>
            <person name="Cerutti L."/>
            <person name="Lowe T."/>
            <person name="McCombie W.R."/>
            <person name="Paulsen I."/>
            <person name="Potashkin J."/>
            <person name="Shpakovski G.V."/>
            <person name="Ussery D."/>
            <person name="Barrell B.G."/>
            <person name="Nurse P."/>
        </authorList>
    </citation>
    <scope>NUCLEOTIDE SEQUENCE [LARGE SCALE GENOMIC DNA]</scope>
    <source>
        <strain>972 / ATCC 24843</strain>
    </source>
</reference>
<reference key="4">
    <citation type="journal article" date="1997" name="DNA Res.">
        <title>Identification of open reading frames in Schizosaccharomyces pombe cDNAs.</title>
        <authorList>
            <person name="Yoshioka S."/>
            <person name="Kato K."/>
            <person name="Nakai K."/>
            <person name="Okayama H."/>
            <person name="Nojima H."/>
        </authorList>
    </citation>
    <scope>NUCLEOTIDE SEQUENCE [LARGE SCALE MRNA] OF 215-627</scope>
    <source>
        <strain>PR745</strain>
    </source>
</reference>
<dbReference type="EMBL" id="AB041232">
    <property type="protein sequence ID" value="BAB40598.1"/>
    <property type="molecule type" value="Genomic_DNA"/>
</dbReference>
<dbReference type="EMBL" id="CU329670">
    <property type="protein sequence ID" value="CAB11096.1"/>
    <property type="molecule type" value="Genomic_DNA"/>
</dbReference>
<dbReference type="EMBL" id="D89107">
    <property type="protein sequence ID" value="BAA13770.1"/>
    <property type="molecule type" value="mRNA"/>
</dbReference>
<dbReference type="PIR" id="T11663">
    <property type="entry name" value="T11663"/>
</dbReference>
<dbReference type="RefSeq" id="NP_593298.1">
    <property type="nucleotide sequence ID" value="NM_001018728.2"/>
</dbReference>
<dbReference type="SMR" id="P78759"/>
<dbReference type="BioGRID" id="279335">
    <property type="interactions" value="61"/>
</dbReference>
<dbReference type="FunCoup" id="P78759">
    <property type="interactions" value="120"/>
</dbReference>
<dbReference type="STRING" id="284812.P78759"/>
<dbReference type="iPTMnet" id="P78759"/>
<dbReference type="PaxDb" id="4896-SPAC6F12.12.1"/>
<dbReference type="EnsemblFungi" id="SPAC6F12.12.1">
    <property type="protein sequence ID" value="SPAC6F12.12.1:pep"/>
    <property type="gene ID" value="SPAC6F12.12"/>
</dbReference>
<dbReference type="GeneID" id="2542891"/>
<dbReference type="KEGG" id="spo:2542891"/>
<dbReference type="PomBase" id="SPAC6F12.12">
    <property type="gene designation" value="par2"/>
</dbReference>
<dbReference type="VEuPathDB" id="FungiDB:SPAC6F12.12"/>
<dbReference type="eggNOG" id="KOG2085">
    <property type="taxonomic scope" value="Eukaryota"/>
</dbReference>
<dbReference type="HOGENOM" id="CLU_012437_1_2_1"/>
<dbReference type="InParanoid" id="P78759"/>
<dbReference type="OMA" id="MVPLFCR"/>
<dbReference type="PhylomeDB" id="P78759"/>
<dbReference type="Reactome" id="R-SPO-198753">
    <property type="pathway name" value="ERK/MAPK targets"/>
</dbReference>
<dbReference type="Reactome" id="R-SPO-202670">
    <property type="pathway name" value="ERKs are inactivated"/>
</dbReference>
<dbReference type="Reactome" id="R-SPO-389513">
    <property type="pathway name" value="Co-inhibition by CTLA4"/>
</dbReference>
<dbReference type="Reactome" id="R-SPO-6811558">
    <property type="pathway name" value="PI5P, PP2A and IER3 Regulate PI3K/AKT Signaling"/>
</dbReference>
<dbReference type="PRO" id="PR:P78759"/>
<dbReference type="Proteomes" id="UP000002485">
    <property type="component" value="Chromosome I"/>
</dbReference>
<dbReference type="GO" id="GO:0032153">
    <property type="term" value="C:cell division site"/>
    <property type="evidence" value="ECO:0000314"/>
    <property type="project" value="PomBase"/>
</dbReference>
<dbReference type="GO" id="GO:0051286">
    <property type="term" value="C:cell tip"/>
    <property type="evidence" value="ECO:0000314"/>
    <property type="project" value="PomBase"/>
</dbReference>
<dbReference type="GO" id="GO:0005737">
    <property type="term" value="C:cytoplasm"/>
    <property type="evidence" value="ECO:0007669"/>
    <property type="project" value="UniProtKB-SubCell"/>
</dbReference>
<dbReference type="GO" id="GO:0000159">
    <property type="term" value="C:protein phosphatase type 2A complex"/>
    <property type="evidence" value="ECO:0000304"/>
    <property type="project" value="PomBase"/>
</dbReference>
<dbReference type="GO" id="GO:0072542">
    <property type="term" value="F:protein phosphatase activator activity"/>
    <property type="evidence" value="ECO:0000318"/>
    <property type="project" value="GO_Central"/>
</dbReference>
<dbReference type="GO" id="GO:1902426">
    <property type="term" value="P:deactivation of mitotic spindle assembly checkpoint"/>
    <property type="evidence" value="ECO:0000315"/>
    <property type="project" value="PomBase"/>
</dbReference>
<dbReference type="GO" id="GO:0051177">
    <property type="term" value="P:meiotic sister chromatid cohesion"/>
    <property type="evidence" value="ECO:0000318"/>
    <property type="project" value="GO_Central"/>
</dbReference>
<dbReference type="GO" id="GO:0031030">
    <property type="term" value="P:negative regulation of septation initiation signaling"/>
    <property type="evidence" value="ECO:0000315"/>
    <property type="project" value="PomBase"/>
</dbReference>
<dbReference type="GO" id="GO:0007165">
    <property type="term" value="P:signal transduction"/>
    <property type="evidence" value="ECO:0007669"/>
    <property type="project" value="InterPro"/>
</dbReference>
<dbReference type="FunFam" id="1.25.10.10:FF:000331">
    <property type="entry name" value="Phosphoprotein phosphatase, putative"/>
    <property type="match status" value="1"/>
</dbReference>
<dbReference type="Gene3D" id="1.25.10.10">
    <property type="entry name" value="Leucine-rich Repeat Variant"/>
    <property type="match status" value="1"/>
</dbReference>
<dbReference type="InterPro" id="IPR011989">
    <property type="entry name" value="ARM-like"/>
</dbReference>
<dbReference type="InterPro" id="IPR016024">
    <property type="entry name" value="ARM-type_fold"/>
</dbReference>
<dbReference type="InterPro" id="IPR002554">
    <property type="entry name" value="PP2A_B56"/>
</dbReference>
<dbReference type="PANTHER" id="PTHR10257">
    <property type="entry name" value="SERINE/THREONINE PROTEIN PHOSPHATASE 2A PP2A REGULATORY SUBUNIT B"/>
    <property type="match status" value="1"/>
</dbReference>
<dbReference type="PANTHER" id="PTHR10257:SF3">
    <property type="entry name" value="SERINE_THREONINE-PROTEIN PHOSPHATASE 2A 56 KDA REGULATORY SUBUNIT GAMMA ISOFORM"/>
    <property type="match status" value="1"/>
</dbReference>
<dbReference type="Pfam" id="PF01603">
    <property type="entry name" value="B56"/>
    <property type="match status" value="1"/>
</dbReference>
<dbReference type="PIRSF" id="PIRSF028043">
    <property type="entry name" value="PP2A_B56"/>
    <property type="match status" value="1"/>
</dbReference>
<dbReference type="SUPFAM" id="SSF48371">
    <property type="entry name" value="ARM repeat"/>
    <property type="match status" value="1"/>
</dbReference>
<accession>P78759</accession>
<comment type="function">
    <text evidence="2 3">The B regulatory subunit might modulate substrate selectivity and catalytic activity, and might also direct the localization of the catalytic enzyme to a particular subcellular compartment. Has a role in cell shape control and septum formation.</text>
</comment>
<comment type="subunit">
    <text evidence="3">PP2A consists of a common heterodimeric core enzyme, composed of a 36 kDa catalytic subunit (subunit C) and a 65 kDa constant regulatory subunit (PR65 or subunit A), that associates with a variety of regulatory subunits. Proteins that associate with the core dimer include three families of regulatory subunits B (the R2/B/PR55/B55, R3/B''/PR72/PR130/PR59 and R5/B'/B56 families), the 48 kDa variable regulatory subunit, viral proteins, and cell signaling molecules.</text>
</comment>
<comment type="subcellular location">
    <subcellularLocation>
        <location evidence="2">Cytoplasm</location>
    </subcellularLocation>
    <subcellularLocation>
        <location evidence="2">Cell tip</location>
    </subcellularLocation>
</comment>
<comment type="similarity">
    <text evidence="4">Belongs to the phosphatase 2A regulatory subunit B family.</text>
</comment>
<organism>
    <name type="scientific">Schizosaccharomyces pombe (strain 972 / ATCC 24843)</name>
    <name type="common">Fission yeast</name>
    <dbReference type="NCBI Taxonomy" id="284812"/>
    <lineage>
        <taxon>Eukaryota</taxon>
        <taxon>Fungi</taxon>
        <taxon>Dikarya</taxon>
        <taxon>Ascomycota</taxon>
        <taxon>Taphrinomycotina</taxon>
        <taxon>Schizosaccharomycetes</taxon>
        <taxon>Schizosaccharomycetales</taxon>
        <taxon>Schizosaccharomycetaceae</taxon>
        <taxon>Schizosaccharomyces</taxon>
    </lineage>
</organism>
<name>2AD2_SCHPO</name>
<proteinExistence type="evidence at protein level"/>